<name>H_BPPHM</name>
<protein>
    <recommendedName>
        <fullName>Minor spike protein H</fullName>
    </recommendedName>
    <alternativeName>
        <fullName>H protein</fullName>
    </alternativeName>
    <alternativeName>
        <fullName>Pilot protein</fullName>
    </alternativeName>
    <alternativeName>
        <fullName>Protein VP2</fullName>
        <shortName>VP2</shortName>
    </alternativeName>
</protein>
<proteinExistence type="inferred from homology"/>
<reference key="1">
    <citation type="journal article" date="2002" name="J. Bacteriol.">
        <title>Microviridae, a family divided: isolation, characterization, and genome sequence of phiMH2K, a bacteriophage of the obligate intracellular parasitic bacterium Bdellovibrio bacteriovorus.</title>
        <authorList>
            <person name="Brentlinger K.L."/>
            <person name="Hafenstein S."/>
            <person name="Novak C.R."/>
            <person name="Fane B.A."/>
            <person name="Borgon R."/>
            <person name="McKenna R."/>
            <person name="Agbandje-McKenna M."/>
        </authorList>
    </citation>
    <scope>NUCLEOTIDE SEQUENCE [GENOMIC DNA]</scope>
</reference>
<sequence length="199" mass="21481">MALPALVAAAAPAVIGGIASYFGQQETNAANAKLAVWQTRENQAEAARNRKWQEQMSNSAHQREANDLQTAGLNRLLTATGGASTPSGGQGQAAGATMENSLKAGITTAFEAKQLGMQIERQEKELQNLAAQTRKLNIDAKVAEKRIPESDLKTKFTTNFSPVIDRVINLEDSNGPRLSNLREEKKPNQMPLKNGKLNT</sequence>
<accession>Q9G055</accession>
<organismHost>
    <name type="scientific">Bdellovibrio bacteriovorus</name>
    <dbReference type="NCBI Taxonomy" id="959"/>
</organismHost>
<gene>
    <name type="ORF">ORF2</name>
</gene>
<organism>
    <name type="scientific">Bdellovibrio phage phiMH2K</name>
    <name type="common">Bacteriophage phiMH2K</name>
    <dbReference type="NCBI Taxonomy" id="145579"/>
    <lineage>
        <taxon>Viruses</taxon>
        <taxon>Monodnaviria</taxon>
        <taxon>Sangervirae</taxon>
        <taxon>Phixviricota</taxon>
        <taxon>Malgrandaviricetes</taxon>
        <taxon>Petitvirales</taxon>
        <taxon>Microviridae</taxon>
        <taxon>Gokushovirinae</taxon>
        <taxon>Bdellomicrovirus</taxon>
        <taxon>Bdellomicrovirus MH2K</taxon>
    </lineage>
</organism>
<feature type="chain" id="PRO_0000372063" description="Minor spike protein H">
    <location>
        <begin position="1"/>
        <end position="199"/>
    </location>
</feature>
<feature type="region of interest" description="Disordered" evidence="2">
    <location>
        <begin position="171"/>
        <end position="199"/>
    </location>
</feature>
<evidence type="ECO:0000250" key="1"/>
<evidence type="ECO:0000256" key="2">
    <source>
        <dbReference type="SAM" id="MobiDB-lite"/>
    </source>
</evidence>
<evidence type="ECO:0000305" key="3"/>
<comment type="function">
    <text evidence="1">Probably triggers with protein G the injection of the phage DNA into the host upon conformational changes induced by virus-host receptor interaction.</text>
</comment>
<comment type="subcellular location">
    <subcellularLocation>
        <location evidence="3">Virion</location>
    </subcellularLocation>
</comment>
<comment type="similarity">
    <text evidence="3">Belongs to the microviridae H protein family.</text>
</comment>
<dbReference type="EMBL" id="AF306496">
    <property type="protein sequence ID" value="AAG45344.1"/>
    <property type="molecule type" value="Genomic_DNA"/>
</dbReference>
<dbReference type="RefSeq" id="NP_073542.1">
    <property type="nucleotide sequence ID" value="NC_002643.1"/>
</dbReference>
<dbReference type="SMR" id="Q9G055"/>
<dbReference type="KEGG" id="vg:918749"/>
<dbReference type="OrthoDB" id="41532at10239"/>
<dbReference type="Proteomes" id="UP000002418">
    <property type="component" value="Genome"/>
</dbReference>
<dbReference type="GO" id="GO:0019028">
    <property type="term" value="C:viral capsid"/>
    <property type="evidence" value="ECO:0007669"/>
    <property type="project" value="UniProtKB-KW"/>
</dbReference>
<dbReference type="GO" id="GO:0046718">
    <property type="term" value="P:symbiont entry into host cell"/>
    <property type="evidence" value="ECO:0007669"/>
    <property type="project" value="UniProtKB-KW"/>
</dbReference>
<keyword id="KW-0167">Capsid protein</keyword>
<keyword id="KW-0945">Host-virus interaction</keyword>
<keyword id="KW-1185">Reference proteome</keyword>
<keyword id="KW-1171">Viral genome ejection through host cell envelope</keyword>
<keyword id="KW-1162">Viral penetration into host cytoplasm</keyword>
<keyword id="KW-0946">Virion</keyword>
<keyword id="KW-1160">Virus entry into host cell</keyword>